<accession>C5C2D6</accession>
<organism>
    <name type="scientific">Beutenbergia cavernae (strain ATCC BAA-8 / DSM 12333 / CCUG 43141 / JCM 11478 / NBRC 16432 / NCIMB 13614 / HKI 0122)</name>
    <dbReference type="NCBI Taxonomy" id="471853"/>
    <lineage>
        <taxon>Bacteria</taxon>
        <taxon>Bacillati</taxon>
        <taxon>Actinomycetota</taxon>
        <taxon>Actinomycetes</taxon>
        <taxon>Micrococcales</taxon>
        <taxon>Beutenbergiaceae</taxon>
        <taxon>Beutenbergia</taxon>
    </lineage>
</organism>
<feature type="chain" id="PRO_1000203301" description="tRNA-specific 2-thiouridylase MnmA">
    <location>
        <begin position="1"/>
        <end position="380"/>
    </location>
</feature>
<feature type="region of interest" description="Interaction with tRNA" evidence="1">
    <location>
        <begin position="148"/>
        <end position="150"/>
    </location>
</feature>
<feature type="active site" description="Nucleophile" evidence="1">
    <location>
        <position position="101"/>
    </location>
</feature>
<feature type="active site" description="Cysteine persulfide intermediate" evidence="1">
    <location>
        <position position="199"/>
    </location>
</feature>
<feature type="binding site" evidence="1">
    <location>
        <begin position="6"/>
        <end position="13"/>
    </location>
    <ligand>
        <name>ATP</name>
        <dbReference type="ChEBI" id="CHEBI:30616"/>
    </ligand>
</feature>
<feature type="binding site" evidence="1">
    <location>
        <position position="32"/>
    </location>
    <ligand>
        <name>ATP</name>
        <dbReference type="ChEBI" id="CHEBI:30616"/>
    </ligand>
</feature>
<feature type="binding site" evidence="1">
    <location>
        <position position="125"/>
    </location>
    <ligand>
        <name>ATP</name>
        <dbReference type="ChEBI" id="CHEBI:30616"/>
    </ligand>
</feature>
<feature type="site" description="Interaction with tRNA" evidence="1">
    <location>
        <position position="126"/>
    </location>
</feature>
<feature type="site" description="Interaction with tRNA" evidence="1">
    <location>
        <position position="343"/>
    </location>
</feature>
<feature type="disulfide bond" description="Alternate" evidence="1">
    <location>
        <begin position="101"/>
        <end position="199"/>
    </location>
</feature>
<protein>
    <recommendedName>
        <fullName evidence="1">tRNA-specific 2-thiouridylase MnmA</fullName>
        <ecNumber evidence="1">2.8.1.13</ecNumber>
    </recommendedName>
</protein>
<proteinExistence type="inferred from homology"/>
<comment type="function">
    <text evidence="1">Catalyzes the 2-thiolation of uridine at the wobble position (U34) of tRNA, leading to the formation of s(2)U34.</text>
</comment>
<comment type="catalytic activity">
    <reaction evidence="1">
        <text>S-sulfanyl-L-cysteinyl-[protein] + uridine(34) in tRNA + AH2 + ATP = 2-thiouridine(34) in tRNA + L-cysteinyl-[protein] + A + AMP + diphosphate + H(+)</text>
        <dbReference type="Rhea" id="RHEA:47032"/>
        <dbReference type="Rhea" id="RHEA-COMP:10131"/>
        <dbReference type="Rhea" id="RHEA-COMP:11726"/>
        <dbReference type="Rhea" id="RHEA-COMP:11727"/>
        <dbReference type="Rhea" id="RHEA-COMP:11728"/>
        <dbReference type="ChEBI" id="CHEBI:13193"/>
        <dbReference type="ChEBI" id="CHEBI:15378"/>
        <dbReference type="ChEBI" id="CHEBI:17499"/>
        <dbReference type="ChEBI" id="CHEBI:29950"/>
        <dbReference type="ChEBI" id="CHEBI:30616"/>
        <dbReference type="ChEBI" id="CHEBI:33019"/>
        <dbReference type="ChEBI" id="CHEBI:61963"/>
        <dbReference type="ChEBI" id="CHEBI:65315"/>
        <dbReference type="ChEBI" id="CHEBI:87170"/>
        <dbReference type="ChEBI" id="CHEBI:456215"/>
        <dbReference type="EC" id="2.8.1.13"/>
    </reaction>
</comment>
<comment type="subcellular location">
    <subcellularLocation>
        <location evidence="1">Cytoplasm</location>
    </subcellularLocation>
</comment>
<comment type="similarity">
    <text evidence="1">Belongs to the MnmA/TRMU family.</text>
</comment>
<dbReference type="EC" id="2.8.1.13" evidence="1"/>
<dbReference type="EMBL" id="CP001618">
    <property type="protein sequence ID" value="ACQ79622.1"/>
    <property type="molecule type" value="Genomic_DNA"/>
</dbReference>
<dbReference type="RefSeq" id="WP_015881862.1">
    <property type="nucleotide sequence ID" value="NC_012669.1"/>
</dbReference>
<dbReference type="SMR" id="C5C2D6"/>
<dbReference type="STRING" id="471853.Bcav_1363"/>
<dbReference type="KEGG" id="bcv:Bcav_1363"/>
<dbReference type="eggNOG" id="COG0482">
    <property type="taxonomic scope" value="Bacteria"/>
</dbReference>
<dbReference type="HOGENOM" id="CLU_035188_0_2_11"/>
<dbReference type="OrthoDB" id="9800696at2"/>
<dbReference type="Proteomes" id="UP000007962">
    <property type="component" value="Chromosome"/>
</dbReference>
<dbReference type="GO" id="GO:0005737">
    <property type="term" value="C:cytoplasm"/>
    <property type="evidence" value="ECO:0007669"/>
    <property type="project" value="UniProtKB-SubCell"/>
</dbReference>
<dbReference type="GO" id="GO:0005524">
    <property type="term" value="F:ATP binding"/>
    <property type="evidence" value="ECO:0007669"/>
    <property type="project" value="UniProtKB-KW"/>
</dbReference>
<dbReference type="GO" id="GO:0000049">
    <property type="term" value="F:tRNA binding"/>
    <property type="evidence" value="ECO:0007669"/>
    <property type="project" value="UniProtKB-KW"/>
</dbReference>
<dbReference type="GO" id="GO:0103016">
    <property type="term" value="F:tRNA-uridine 2-sulfurtransferase activity"/>
    <property type="evidence" value="ECO:0007669"/>
    <property type="project" value="UniProtKB-EC"/>
</dbReference>
<dbReference type="GO" id="GO:0002143">
    <property type="term" value="P:tRNA wobble position uridine thiolation"/>
    <property type="evidence" value="ECO:0007669"/>
    <property type="project" value="TreeGrafter"/>
</dbReference>
<dbReference type="CDD" id="cd01998">
    <property type="entry name" value="MnmA_TRMU-like"/>
    <property type="match status" value="1"/>
</dbReference>
<dbReference type="FunFam" id="3.40.50.620:FF:000057">
    <property type="entry name" value="tRNA-specific 2-thiouridylase MnmA"/>
    <property type="match status" value="1"/>
</dbReference>
<dbReference type="Gene3D" id="2.30.30.280">
    <property type="entry name" value="Adenine nucleotide alpha hydrolases-like domains"/>
    <property type="match status" value="1"/>
</dbReference>
<dbReference type="Gene3D" id="3.40.50.620">
    <property type="entry name" value="HUPs"/>
    <property type="match status" value="1"/>
</dbReference>
<dbReference type="Gene3D" id="2.40.30.10">
    <property type="entry name" value="Translation factors"/>
    <property type="match status" value="1"/>
</dbReference>
<dbReference type="HAMAP" id="MF_00144">
    <property type="entry name" value="tRNA_thiouridyl_MnmA"/>
    <property type="match status" value="1"/>
</dbReference>
<dbReference type="InterPro" id="IPR004506">
    <property type="entry name" value="MnmA-like"/>
</dbReference>
<dbReference type="InterPro" id="IPR046885">
    <property type="entry name" value="MnmA-like_C"/>
</dbReference>
<dbReference type="InterPro" id="IPR046884">
    <property type="entry name" value="MnmA-like_central"/>
</dbReference>
<dbReference type="InterPro" id="IPR023382">
    <property type="entry name" value="MnmA-like_central_sf"/>
</dbReference>
<dbReference type="InterPro" id="IPR014729">
    <property type="entry name" value="Rossmann-like_a/b/a_fold"/>
</dbReference>
<dbReference type="NCBIfam" id="NF001138">
    <property type="entry name" value="PRK00143.1"/>
    <property type="match status" value="1"/>
</dbReference>
<dbReference type="NCBIfam" id="TIGR00420">
    <property type="entry name" value="trmU"/>
    <property type="match status" value="1"/>
</dbReference>
<dbReference type="PANTHER" id="PTHR11933:SF5">
    <property type="entry name" value="MITOCHONDRIAL TRNA-SPECIFIC 2-THIOURIDYLASE 1"/>
    <property type="match status" value="1"/>
</dbReference>
<dbReference type="PANTHER" id="PTHR11933">
    <property type="entry name" value="TRNA 5-METHYLAMINOMETHYL-2-THIOURIDYLATE -METHYLTRANSFERASE"/>
    <property type="match status" value="1"/>
</dbReference>
<dbReference type="Pfam" id="PF03054">
    <property type="entry name" value="tRNA_Me_trans"/>
    <property type="match status" value="1"/>
</dbReference>
<dbReference type="Pfam" id="PF20258">
    <property type="entry name" value="tRNA_Me_trans_C"/>
    <property type="match status" value="1"/>
</dbReference>
<dbReference type="Pfam" id="PF20259">
    <property type="entry name" value="tRNA_Me_trans_M"/>
    <property type="match status" value="1"/>
</dbReference>
<dbReference type="SUPFAM" id="SSF52402">
    <property type="entry name" value="Adenine nucleotide alpha hydrolases-like"/>
    <property type="match status" value="1"/>
</dbReference>
<name>MNMA_BEUC1</name>
<evidence type="ECO:0000255" key="1">
    <source>
        <dbReference type="HAMAP-Rule" id="MF_00144"/>
    </source>
</evidence>
<sequence length="380" mass="39681">MRVLAALSGGVDSAVAAARAVDAGHDVVGVHMALSRTRAQHRTGSRGCCSIEDASDARRAADVLGIPFYVWDLSEEFTDTVVADFLSEYAAGRTPNPCVRCNEHIKFSALLDRGLALGFDAVATGHYARIERGAAGVPELHRAADAAKDQSYVLAVMGPERLARSLFPLGEVPTKDAVRAEAAARGLSVSAKPDSYDICFVADGDTQGFLRSHLGSQPGPVLDTDGREVGAHDGAYAFTVGQRKGLRLPRPAADGRPRYVVDVRTASNTVVVGPAELLSVRDVLGERPVWLAEEPHEWTDATVQVRAHGAALPARIRTVTDDDGASHLAARLAEPLRGLAAGQSVVAYDGTRVLGQATVAATGRDAVAAAPALAGVGSTA</sequence>
<reference key="1">
    <citation type="journal article" date="2009" name="Stand. Genomic Sci.">
        <title>Complete genome sequence of Beutenbergia cavernae type strain (HKI 0122).</title>
        <authorList>
            <person name="Land M."/>
            <person name="Pukall R."/>
            <person name="Abt B."/>
            <person name="Goker M."/>
            <person name="Rohde M."/>
            <person name="Glavina Del Rio T."/>
            <person name="Tice H."/>
            <person name="Copeland A."/>
            <person name="Cheng J.F."/>
            <person name="Lucas S."/>
            <person name="Chen F."/>
            <person name="Nolan M."/>
            <person name="Bruce D."/>
            <person name="Goodwin L."/>
            <person name="Pitluck S."/>
            <person name="Ivanova N."/>
            <person name="Mavromatis K."/>
            <person name="Ovchinnikova G."/>
            <person name="Pati A."/>
            <person name="Chen A."/>
            <person name="Palaniappan K."/>
            <person name="Hauser L."/>
            <person name="Chang Y.J."/>
            <person name="Jefferies C.C."/>
            <person name="Saunders E."/>
            <person name="Brettin T."/>
            <person name="Detter J.C."/>
            <person name="Han C."/>
            <person name="Chain P."/>
            <person name="Bristow J."/>
            <person name="Eisen J.A."/>
            <person name="Markowitz V."/>
            <person name="Hugenholtz P."/>
            <person name="Kyrpides N.C."/>
            <person name="Klenk H.P."/>
            <person name="Lapidus A."/>
        </authorList>
    </citation>
    <scope>NUCLEOTIDE SEQUENCE [LARGE SCALE GENOMIC DNA]</scope>
    <source>
        <strain>ATCC BAA-8 / DSM 12333 / CCUG 43141 / JCM 11478 / NBRC 16432 / NCIMB 13614 / HKI 0122</strain>
    </source>
</reference>
<gene>
    <name evidence="1" type="primary">mnmA</name>
    <name type="ordered locus">Bcav_1363</name>
</gene>
<keyword id="KW-0067">ATP-binding</keyword>
<keyword id="KW-0963">Cytoplasm</keyword>
<keyword id="KW-1015">Disulfide bond</keyword>
<keyword id="KW-0547">Nucleotide-binding</keyword>
<keyword id="KW-1185">Reference proteome</keyword>
<keyword id="KW-0694">RNA-binding</keyword>
<keyword id="KW-0808">Transferase</keyword>
<keyword id="KW-0819">tRNA processing</keyword>
<keyword id="KW-0820">tRNA-binding</keyword>